<protein>
    <recommendedName>
        <fullName evidence="1">Small ribosomal subunit protein bS18</fullName>
    </recommendedName>
    <alternativeName>
        <fullName evidence="3">30S ribosomal protein S18</fullName>
    </alternativeName>
</protein>
<proteinExistence type="inferred from homology"/>
<accession>A8Z621</accession>
<reference key="1">
    <citation type="journal article" date="2007" name="Proc. Natl. Acad. Sci. U.S.A.">
        <title>Parallel genomic evolution and metabolic interdependence in an ancient symbiosis.</title>
        <authorList>
            <person name="McCutcheon J.P."/>
            <person name="Moran N.A."/>
        </authorList>
    </citation>
    <scope>NUCLEOTIDE SEQUENCE [LARGE SCALE GENOMIC DNA]</scope>
    <source>
        <strain>GWSS</strain>
    </source>
</reference>
<gene>
    <name evidence="1" type="primary">rpsR</name>
    <name type="ordered locus">SMGWSS_171</name>
</gene>
<sequence length="180" mass="21177">MKNKLKKKKNPKGTKKIKAKAKAHKVGTTKVKVKKKIYTIGTLHDLPSQIESYSDKESYSDKESYSDKESYSDKESYSDKESYSDKNILVKIFYEPEIRYLTPLEIETKPENKYCFFKKNNIKYIDFKNPSFLMKFLNERGEILPRRITGTSKKFQKKLKRAIKKCKHIGLLPYLTDGLR</sequence>
<evidence type="ECO:0000255" key="1">
    <source>
        <dbReference type="HAMAP-Rule" id="MF_00270"/>
    </source>
</evidence>
<evidence type="ECO:0000256" key="2">
    <source>
        <dbReference type="SAM" id="MobiDB-lite"/>
    </source>
</evidence>
<evidence type="ECO:0000305" key="3"/>
<keyword id="KW-0687">Ribonucleoprotein</keyword>
<keyword id="KW-0689">Ribosomal protein</keyword>
<keyword id="KW-0694">RNA-binding</keyword>
<keyword id="KW-0699">rRNA-binding</keyword>
<comment type="function">
    <text evidence="1">Binds as a heterodimer with protein bS6 to the central domain of the 16S rRNA, where it helps stabilize the platform of the 30S subunit.</text>
</comment>
<comment type="subunit">
    <text evidence="1">Part of the 30S ribosomal subunit. Forms a tight heterodimer with protein bS6.</text>
</comment>
<comment type="similarity">
    <text evidence="1">Belongs to the bacterial ribosomal protein bS18 family.</text>
</comment>
<name>RS18_KARMG</name>
<feature type="chain" id="PRO_0000345552" description="Small ribosomal subunit protein bS18">
    <location>
        <begin position="1"/>
        <end position="180"/>
    </location>
</feature>
<feature type="region of interest" description="Disordered" evidence="2">
    <location>
        <begin position="1"/>
        <end position="26"/>
    </location>
</feature>
<feature type="region of interest" description="Disordered" evidence="2">
    <location>
        <begin position="53"/>
        <end position="82"/>
    </location>
</feature>
<organism>
    <name type="scientific">Karelsulcia muelleri (strain GWSS)</name>
    <name type="common">Sulcia muelleri</name>
    <dbReference type="NCBI Taxonomy" id="444179"/>
    <lineage>
        <taxon>Bacteria</taxon>
        <taxon>Pseudomonadati</taxon>
        <taxon>Bacteroidota</taxon>
        <taxon>Flavobacteriia</taxon>
        <taxon>Flavobacteriales</taxon>
        <taxon>Candidatus Karelsulcia</taxon>
    </lineage>
</organism>
<dbReference type="EMBL" id="CP000770">
    <property type="protein sequence ID" value="ABS30572.1"/>
    <property type="molecule type" value="Genomic_DNA"/>
</dbReference>
<dbReference type="SMR" id="A8Z621"/>
<dbReference type="STRING" id="444179.SMGWSS_171"/>
<dbReference type="KEGG" id="smg:SMGWSS_171"/>
<dbReference type="HOGENOM" id="CLU_1685665_0_0_10"/>
<dbReference type="Proteomes" id="UP000000781">
    <property type="component" value="Chromosome"/>
</dbReference>
<dbReference type="GO" id="GO:0022627">
    <property type="term" value="C:cytosolic small ribosomal subunit"/>
    <property type="evidence" value="ECO:0007669"/>
    <property type="project" value="TreeGrafter"/>
</dbReference>
<dbReference type="GO" id="GO:0070181">
    <property type="term" value="F:small ribosomal subunit rRNA binding"/>
    <property type="evidence" value="ECO:0007669"/>
    <property type="project" value="TreeGrafter"/>
</dbReference>
<dbReference type="GO" id="GO:0003735">
    <property type="term" value="F:structural constituent of ribosome"/>
    <property type="evidence" value="ECO:0007669"/>
    <property type="project" value="InterPro"/>
</dbReference>
<dbReference type="GO" id="GO:0006412">
    <property type="term" value="P:translation"/>
    <property type="evidence" value="ECO:0007669"/>
    <property type="project" value="UniProtKB-UniRule"/>
</dbReference>
<dbReference type="Gene3D" id="4.10.640.10">
    <property type="entry name" value="Ribosomal protein S18"/>
    <property type="match status" value="1"/>
</dbReference>
<dbReference type="HAMAP" id="MF_00270">
    <property type="entry name" value="Ribosomal_bS18"/>
    <property type="match status" value="1"/>
</dbReference>
<dbReference type="InterPro" id="IPR001648">
    <property type="entry name" value="Ribosomal_bS18"/>
</dbReference>
<dbReference type="InterPro" id="IPR036870">
    <property type="entry name" value="Ribosomal_bS18_sf"/>
</dbReference>
<dbReference type="NCBIfam" id="TIGR00165">
    <property type="entry name" value="S18"/>
    <property type="match status" value="1"/>
</dbReference>
<dbReference type="PANTHER" id="PTHR13479">
    <property type="entry name" value="30S RIBOSOMAL PROTEIN S18"/>
    <property type="match status" value="1"/>
</dbReference>
<dbReference type="PANTHER" id="PTHR13479:SF40">
    <property type="entry name" value="SMALL RIBOSOMAL SUBUNIT PROTEIN BS18M"/>
    <property type="match status" value="1"/>
</dbReference>
<dbReference type="Pfam" id="PF01084">
    <property type="entry name" value="Ribosomal_S18"/>
    <property type="match status" value="1"/>
</dbReference>
<dbReference type="PRINTS" id="PR00974">
    <property type="entry name" value="RIBOSOMALS18"/>
</dbReference>
<dbReference type="SUPFAM" id="SSF46911">
    <property type="entry name" value="Ribosomal protein S18"/>
    <property type="match status" value="1"/>
</dbReference>